<feature type="chain" id="PRO_0000417123" description="Meso-diaminopimelate D-dehydrogenase">
    <location>
        <begin position="1"/>
        <end position="334"/>
    </location>
</feature>
<feature type="binding site" evidence="1">
    <location>
        <begin position="16"/>
        <end position="19"/>
    </location>
    <ligand>
        <name>NADP(+)</name>
        <dbReference type="ChEBI" id="CHEBI:58349"/>
    </ligand>
</feature>
<feature type="binding site" evidence="1">
    <location>
        <begin position="40"/>
        <end position="42"/>
    </location>
    <ligand>
        <name>NADP(+)</name>
        <dbReference type="ChEBI" id="CHEBI:58349"/>
    </ligand>
</feature>
<feature type="binding site" evidence="1">
    <location>
        <begin position="75"/>
        <end position="78"/>
    </location>
    <ligand>
        <name>NADP(+)</name>
        <dbReference type="ChEBI" id="CHEBI:58349"/>
    </ligand>
</feature>
<feature type="binding site" evidence="1">
    <location>
        <begin position="98"/>
        <end position="100"/>
    </location>
    <ligand>
        <name>NADP(+)</name>
        <dbReference type="ChEBI" id="CHEBI:58349"/>
    </ligand>
</feature>
<feature type="binding site" evidence="1">
    <location>
        <position position="100"/>
    </location>
    <ligand>
        <name>substrate</name>
    </ligand>
</feature>
<feature type="binding site" evidence="1">
    <location>
        <begin position="127"/>
        <end position="131"/>
    </location>
    <ligand>
        <name>NADP(+)</name>
        <dbReference type="ChEBI" id="CHEBI:58349"/>
    </ligand>
</feature>
<feature type="binding site" evidence="1">
    <location>
        <position position="130"/>
    </location>
    <ligand>
        <name>substrate</name>
    </ligand>
</feature>
<feature type="binding site" evidence="1">
    <location>
        <position position="154"/>
    </location>
    <ligand>
        <name>substrate</name>
    </ligand>
</feature>
<feature type="binding site" evidence="1">
    <location>
        <begin position="160"/>
        <end position="161"/>
    </location>
    <ligand>
        <name>substrate</name>
    </ligand>
</feature>
<feature type="binding site" evidence="1">
    <location>
        <position position="179"/>
    </location>
    <ligand>
        <name>substrate</name>
    </ligand>
</feature>
<feature type="binding site" evidence="1">
    <location>
        <position position="205"/>
    </location>
    <ligand>
        <name>substrate</name>
    </ligand>
</feature>
<feature type="binding site" evidence="1">
    <location>
        <position position="255"/>
    </location>
    <ligand>
        <name>substrate</name>
    </ligand>
</feature>
<feature type="binding site" evidence="1">
    <location>
        <position position="284"/>
    </location>
    <ligand>
        <name>substrate</name>
    </ligand>
</feature>
<name>DAPDH_ACET2</name>
<sequence length="334" mass="37224">MGGVTLEKIRIGIVGYGNLGKGAELGIRQNKDMELVGIFTRRNPNSIKPLTEGVKVYSVDSARDMADKIDVMLLCSGSRTDLPVQGPEFAAMFNIVDGFDTHNKIQEYFESVDAKAKESKKVAVIACGWDPGMFSLNRLFGEVILPEGKTYTFWGKGVSQGHSDAIRRVKGVVDAKQYTIPVESAIELVRKGENPELTTRQKHIRECFVVVEEGADKERIEREIKTMPDYFADYDTIVHFISLEELKEKHSGIPHGGFSIRTGRTGINNENKHTIEYSLKLDSNPDFTANTLLAYARAAYRLNKEGVFGAKTVFDIPPAYLSPKSAEELRRSLL</sequence>
<comment type="function">
    <text evidence="2">Catalyzes the reversible NADPH-dependent reductive amination of L-2-amino-6-oxopimelate, the acyclic form of L-tetrahydrodipicolinate, to generate the meso compound, D,L-2,6-diaminopimelate. Probably plays a role in lysine biosynthesis. Exhibits a high substrate specificity for meso-2,6-diaminopimelate (m-DAP), since the activity with L,L-2,6-diaminopimelate is less than 5% of the activity observed with m-DAP. Can use NAD(+) only very poorly since the activity observed in the presence of NAD(+) is about 0.3% of that with NADP(+).</text>
</comment>
<comment type="catalytic activity">
    <reaction evidence="2">
        <text>meso-2,6-diaminopimelate + NADP(+) + H2O = (S)-2-amino-6-oxoheptanedioate + NH4(+) + NADPH + H(+)</text>
        <dbReference type="Rhea" id="RHEA:13561"/>
        <dbReference type="ChEBI" id="CHEBI:15377"/>
        <dbReference type="ChEBI" id="CHEBI:15378"/>
        <dbReference type="ChEBI" id="CHEBI:28938"/>
        <dbReference type="ChEBI" id="CHEBI:57783"/>
        <dbReference type="ChEBI" id="CHEBI:57791"/>
        <dbReference type="ChEBI" id="CHEBI:58349"/>
        <dbReference type="ChEBI" id="CHEBI:58556"/>
        <dbReference type="EC" id="1.4.1.16"/>
    </reaction>
</comment>
<comment type="biophysicochemical properties">
    <kinetics>
        <KM evidence="2">0.07 mM for meso-2,6-diaminoheptanedioate (at 30 degrees Celsius and pH 10.5)</KM>
        <KM evidence="2">0.13 mM for NADP(+) (at 30 degrees Celsius and pH 10.5)</KM>
        <KM evidence="2">0.09 mM for L-2-amino-6-oxoheptanedioate (at 30 degrees Celsius and pH 10.5)</KM>
        <KM evidence="2">0.21 mM for NADPH (at 30 degrees Celsius and pH 10.5)</KM>
        <KM evidence="2">195 mM for ammonia (at 30 degrees Celsius and pH 10.5)</KM>
        <Vmax evidence="2">15.45 umol/min/mg enzyme for the reductive amination of L-2-amino-6-oxopimelate (at 30 degrees Celsius and pH 10.5)</Vmax>
        <Vmax evidence="2">0.24 umol/min/mg enzyme for the oxidative deamination of meso-2,6-diaminopimelate (at 30 degrees Celsius and pH 10.5)</Vmax>
    </kinetics>
    <temperatureDependence>
        <text evidence="2">Optimum temperature is 65 degrees Celsius.</text>
    </temperatureDependence>
</comment>
<comment type="pathway">
    <text>Amino-acid biosynthesis; L-lysine biosynthesis via DAP pathway; DL-2,6-diaminopimelate from (S)-tetrahydrodipicolinate: step 1/1.</text>
</comment>
<comment type="subunit">
    <text evidence="1">Homodimer.</text>
</comment>
<comment type="induction">
    <text evidence="2">Constitutively expressed.</text>
</comment>
<comment type="similarity">
    <text evidence="3">Belongs to the diaminopimelate dehydrogenase family.</text>
</comment>
<proteinExistence type="evidence at protein level"/>
<evidence type="ECO:0000250" key="1"/>
<evidence type="ECO:0000269" key="2">
    <source>
    </source>
</evidence>
<evidence type="ECO:0000305" key="3"/>
<dbReference type="EC" id="1.4.1.16"/>
<dbReference type="EMBL" id="CP000568">
    <property type="protein sequence ID" value="ABN52156.1"/>
    <property type="molecule type" value="Genomic_DNA"/>
</dbReference>
<dbReference type="SMR" id="A3DDX7"/>
<dbReference type="STRING" id="203119.Cthe_0922"/>
<dbReference type="KEGG" id="cth:Cthe_0922"/>
<dbReference type="eggNOG" id="COG1748">
    <property type="taxonomic scope" value="Bacteria"/>
</dbReference>
<dbReference type="HOGENOM" id="CLU_055796_0_0_9"/>
<dbReference type="UniPathway" id="UPA00034">
    <property type="reaction ID" value="UER00026"/>
</dbReference>
<dbReference type="Proteomes" id="UP000002145">
    <property type="component" value="Chromosome"/>
</dbReference>
<dbReference type="GO" id="GO:0047850">
    <property type="term" value="F:diaminopimelate dehydrogenase activity"/>
    <property type="evidence" value="ECO:0007669"/>
    <property type="project" value="UniProtKB-EC"/>
</dbReference>
<dbReference type="GO" id="GO:0019877">
    <property type="term" value="P:diaminopimelate biosynthetic process"/>
    <property type="evidence" value="ECO:0007669"/>
    <property type="project" value="UniProtKB-KW"/>
</dbReference>
<dbReference type="GO" id="GO:0009089">
    <property type="term" value="P:lysine biosynthetic process via diaminopimelate"/>
    <property type="evidence" value="ECO:0007669"/>
    <property type="project" value="UniProtKB-UniPathway"/>
</dbReference>
<dbReference type="CDD" id="cd02270">
    <property type="entry name" value="meso-DAPDH_N"/>
    <property type="match status" value="1"/>
</dbReference>
<dbReference type="Gene3D" id="3.30.360.10">
    <property type="entry name" value="Dihydrodipicolinate Reductase, domain 2"/>
    <property type="match status" value="1"/>
</dbReference>
<dbReference type="Gene3D" id="3.40.50.720">
    <property type="entry name" value="NAD(P)-binding Rossmann-like Domain"/>
    <property type="match status" value="1"/>
</dbReference>
<dbReference type="InterPro" id="IPR010190">
    <property type="entry name" value="Diaminopimelate_DH_Ddh"/>
</dbReference>
<dbReference type="InterPro" id="IPR032094">
    <property type="entry name" value="Meso-DAP_DH_C"/>
</dbReference>
<dbReference type="InterPro" id="IPR036291">
    <property type="entry name" value="NAD(P)-bd_dom_sf"/>
</dbReference>
<dbReference type="InterPro" id="IPR028939">
    <property type="entry name" value="P5C_Rdtase_cat_N"/>
</dbReference>
<dbReference type="NCBIfam" id="TIGR01921">
    <property type="entry name" value="DAP-DH"/>
    <property type="match status" value="1"/>
</dbReference>
<dbReference type="Pfam" id="PF16654">
    <property type="entry name" value="DAPDH_C"/>
    <property type="match status" value="1"/>
</dbReference>
<dbReference type="Pfam" id="PF03807">
    <property type="entry name" value="F420_oxidored"/>
    <property type="match status" value="1"/>
</dbReference>
<dbReference type="PIRSF" id="PIRSF025648">
    <property type="entry name" value="DDH"/>
    <property type="match status" value="1"/>
</dbReference>
<dbReference type="SUPFAM" id="SSF55347">
    <property type="entry name" value="Glyceraldehyde-3-phosphate dehydrogenase-like, C-terminal domain"/>
    <property type="match status" value="1"/>
</dbReference>
<dbReference type="SUPFAM" id="SSF51735">
    <property type="entry name" value="NAD(P)-binding Rossmann-fold domains"/>
    <property type="match status" value="1"/>
</dbReference>
<accession>A3DDX7</accession>
<keyword id="KW-0028">Amino-acid biosynthesis</keyword>
<keyword id="KW-0220">Diaminopimelate biosynthesis</keyword>
<keyword id="KW-0457">Lysine biosynthesis</keyword>
<keyword id="KW-0521">NADP</keyword>
<keyword id="KW-0560">Oxidoreductase</keyword>
<keyword id="KW-1185">Reference proteome</keyword>
<protein>
    <recommendedName>
        <fullName>Meso-diaminopimelate D-dehydrogenase</fullName>
        <shortName>DAPDH</shortName>
        <shortName>Meso-DAP dehydrogenase</shortName>
        <ecNumber>1.4.1.16</ecNumber>
    </recommendedName>
</protein>
<gene>
    <name type="primary">ddh</name>
    <name type="ordered locus">Cthe_0922</name>
</gene>
<organism>
    <name type="scientific">Acetivibrio thermocellus (strain ATCC 27405 / DSM 1237 / JCM 9322 / NBRC 103400 / NCIMB 10682 / NRRL B-4536 / VPI 7372)</name>
    <name type="common">Clostridium thermocellum</name>
    <dbReference type="NCBI Taxonomy" id="203119"/>
    <lineage>
        <taxon>Bacteria</taxon>
        <taxon>Bacillati</taxon>
        <taxon>Bacillota</taxon>
        <taxon>Clostridia</taxon>
        <taxon>Eubacteriales</taxon>
        <taxon>Oscillospiraceae</taxon>
        <taxon>Acetivibrio</taxon>
    </lineage>
</organism>
<reference key="1">
    <citation type="submission" date="2007-02" db="EMBL/GenBank/DDBJ databases">
        <title>Complete sequence of Clostridium thermocellum ATCC 27405.</title>
        <authorList>
            <consortium name="US DOE Joint Genome Institute"/>
            <person name="Copeland A."/>
            <person name="Lucas S."/>
            <person name="Lapidus A."/>
            <person name="Barry K."/>
            <person name="Detter J.C."/>
            <person name="Glavina del Rio T."/>
            <person name="Hammon N."/>
            <person name="Israni S."/>
            <person name="Dalin E."/>
            <person name="Tice H."/>
            <person name="Pitluck S."/>
            <person name="Chertkov O."/>
            <person name="Brettin T."/>
            <person name="Bruce D."/>
            <person name="Han C."/>
            <person name="Tapia R."/>
            <person name="Gilna P."/>
            <person name="Schmutz J."/>
            <person name="Larimer F."/>
            <person name="Land M."/>
            <person name="Hauser L."/>
            <person name="Kyrpides N."/>
            <person name="Mikhailova N."/>
            <person name="Wu J.H.D."/>
            <person name="Newcomb M."/>
            <person name="Richardson P."/>
        </authorList>
    </citation>
    <scope>NUCLEOTIDE SEQUENCE [LARGE SCALE GENOMIC DNA]</scope>
    <source>
        <strain>ATCC 27405 / DSM 1237 / JCM 9322 / NBRC 103400 / NCIMB 10682 / NRRL B-4536 / VPI 7372</strain>
    </source>
</reference>
<reference key="2">
    <citation type="journal article" date="2011" name="Biochim. Biophys. Acta">
        <title>Dual diaminopimelate biosynthesis pathways in Bacteroides fragilis and Clostridium thermocellum.</title>
        <authorList>
            <person name="Hudson A.O."/>
            <person name="Klartag A."/>
            <person name="Gilvarg C."/>
            <person name="Dobson R.C."/>
            <person name="Marques F.G."/>
            <person name="Leustek T."/>
        </authorList>
    </citation>
    <scope>FUNCTION</scope>
    <scope>CATALYTIC ACTIVITY</scope>
    <scope>SUBSTRATE SPECIFICITY</scope>
    <scope>BIOPHYSICOCHEMICAL PROPERTIES</scope>
    <scope>INDUCTION</scope>
    <source>
        <strain>ATCC 27405 / DSM 1237 / JCM 9322 / NBRC 103400 / NCIMB 10682 / NRRL B-4536 / VPI 7372</strain>
    </source>
</reference>